<organism>
    <name type="scientific">Clostridium perfringens (strain 13 / Type A)</name>
    <dbReference type="NCBI Taxonomy" id="195102"/>
    <lineage>
        <taxon>Bacteria</taxon>
        <taxon>Bacillati</taxon>
        <taxon>Bacillota</taxon>
        <taxon>Clostridia</taxon>
        <taxon>Eubacteriales</taxon>
        <taxon>Clostridiaceae</taxon>
        <taxon>Clostridium</taxon>
    </lineage>
</organism>
<accession>Q8XI62</accession>
<feature type="chain" id="PRO_0000313199" description="DNA ligase">
    <location>
        <begin position="1"/>
        <end position="662"/>
    </location>
</feature>
<feature type="domain" description="BRCT" evidence="1">
    <location>
        <begin position="586"/>
        <end position="662"/>
    </location>
</feature>
<feature type="active site" description="N6-AMP-lysine intermediate" evidence="1">
    <location>
        <position position="121"/>
    </location>
</feature>
<feature type="binding site" evidence="1">
    <location>
        <begin position="31"/>
        <end position="35"/>
    </location>
    <ligand>
        <name>NAD(+)</name>
        <dbReference type="ChEBI" id="CHEBI:57540"/>
    </ligand>
</feature>
<feature type="binding site" evidence="1">
    <location>
        <begin position="79"/>
        <end position="80"/>
    </location>
    <ligand>
        <name>NAD(+)</name>
        <dbReference type="ChEBI" id="CHEBI:57540"/>
    </ligand>
</feature>
<feature type="binding site" evidence="1">
    <location>
        <position position="143"/>
    </location>
    <ligand>
        <name>NAD(+)</name>
        <dbReference type="ChEBI" id="CHEBI:57540"/>
    </ligand>
</feature>
<feature type="binding site" evidence="1">
    <location>
        <position position="177"/>
    </location>
    <ligand>
        <name>NAD(+)</name>
        <dbReference type="ChEBI" id="CHEBI:57540"/>
    </ligand>
</feature>
<feature type="binding site" evidence="1">
    <location>
        <position position="313"/>
    </location>
    <ligand>
        <name>NAD(+)</name>
        <dbReference type="ChEBI" id="CHEBI:57540"/>
    </ligand>
</feature>
<feature type="binding site" evidence="1">
    <location>
        <position position="406"/>
    </location>
    <ligand>
        <name>Zn(2+)</name>
        <dbReference type="ChEBI" id="CHEBI:29105"/>
    </ligand>
</feature>
<feature type="binding site" evidence="1">
    <location>
        <position position="409"/>
    </location>
    <ligand>
        <name>Zn(2+)</name>
        <dbReference type="ChEBI" id="CHEBI:29105"/>
    </ligand>
</feature>
<feature type="binding site" evidence="1">
    <location>
        <position position="422"/>
    </location>
    <ligand>
        <name>Zn(2+)</name>
        <dbReference type="ChEBI" id="CHEBI:29105"/>
    </ligand>
</feature>
<feature type="binding site" evidence="1">
    <location>
        <position position="428"/>
    </location>
    <ligand>
        <name>Zn(2+)</name>
        <dbReference type="ChEBI" id="CHEBI:29105"/>
    </ligand>
</feature>
<protein>
    <recommendedName>
        <fullName evidence="1">DNA ligase</fullName>
        <ecNumber evidence="1">6.5.1.2</ecNumber>
    </recommendedName>
    <alternativeName>
        <fullName evidence="1">Polydeoxyribonucleotide synthase [NAD(+)]</fullName>
    </alternativeName>
</protein>
<proteinExistence type="inferred from homology"/>
<dbReference type="EC" id="6.5.1.2" evidence="1"/>
<dbReference type="EMBL" id="BA000016">
    <property type="protein sequence ID" value="BAB81965.1"/>
    <property type="status" value="ALT_INIT"/>
    <property type="molecule type" value="Genomic_DNA"/>
</dbReference>
<dbReference type="RefSeq" id="WP_041707918.1">
    <property type="nucleotide sequence ID" value="NC_003366.1"/>
</dbReference>
<dbReference type="SMR" id="Q8XI62"/>
<dbReference type="STRING" id="195102.gene:10491567"/>
<dbReference type="KEGG" id="cpe:CPE2259"/>
<dbReference type="HOGENOM" id="CLU_007764_2_1_9"/>
<dbReference type="Proteomes" id="UP000000818">
    <property type="component" value="Chromosome"/>
</dbReference>
<dbReference type="GO" id="GO:0005829">
    <property type="term" value="C:cytosol"/>
    <property type="evidence" value="ECO:0007669"/>
    <property type="project" value="TreeGrafter"/>
</dbReference>
<dbReference type="GO" id="GO:0003677">
    <property type="term" value="F:DNA binding"/>
    <property type="evidence" value="ECO:0007669"/>
    <property type="project" value="InterPro"/>
</dbReference>
<dbReference type="GO" id="GO:0003911">
    <property type="term" value="F:DNA ligase (NAD+) activity"/>
    <property type="evidence" value="ECO:0007669"/>
    <property type="project" value="UniProtKB-UniRule"/>
</dbReference>
<dbReference type="GO" id="GO:0046872">
    <property type="term" value="F:metal ion binding"/>
    <property type="evidence" value="ECO:0007669"/>
    <property type="project" value="UniProtKB-KW"/>
</dbReference>
<dbReference type="GO" id="GO:0006281">
    <property type="term" value="P:DNA repair"/>
    <property type="evidence" value="ECO:0007669"/>
    <property type="project" value="UniProtKB-KW"/>
</dbReference>
<dbReference type="GO" id="GO:0006260">
    <property type="term" value="P:DNA replication"/>
    <property type="evidence" value="ECO:0007669"/>
    <property type="project" value="UniProtKB-KW"/>
</dbReference>
<dbReference type="CDD" id="cd17748">
    <property type="entry name" value="BRCT_DNA_ligase_like"/>
    <property type="match status" value="1"/>
</dbReference>
<dbReference type="CDD" id="cd00114">
    <property type="entry name" value="LIGANc"/>
    <property type="match status" value="1"/>
</dbReference>
<dbReference type="FunFam" id="1.10.150.20:FF:000006">
    <property type="entry name" value="DNA ligase"/>
    <property type="match status" value="1"/>
</dbReference>
<dbReference type="FunFam" id="1.10.150.20:FF:000007">
    <property type="entry name" value="DNA ligase"/>
    <property type="match status" value="1"/>
</dbReference>
<dbReference type="FunFam" id="2.40.50.140:FF:000012">
    <property type="entry name" value="DNA ligase"/>
    <property type="match status" value="1"/>
</dbReference>
<dbReference type="FunFam" id="3.40.50.10190:FF:000054">
    <property type="entry name" value="DNA ligase"/>
    <property type="match status" value="1"/>
</dbReference>
<dbReference type="Gene3D" id="1.10.150.20">
    <property type="entry name" value="5' to 3' exonuclease, C-terminal subdomain"/>
    <property type="match status" value="2"/>
</dbReference>
<dbReference type="Gene3D" id="3.40.50.10190">
    <property type="entry name" value="BRCT domain"/>
    <property type="match status" value="1"/>
</dbReference>
<dbReference type="Gene3D" id="3.30.470.30">
    <property type="entry name" value="DNA ligase/mRNA capping enzyme"/>
    <property type="match status" value="1"/>
</dbReference>
<dbReference type="Gene3D" id="1.10.287.610">
    <property type="entry name" value="Helix hairpin bin"/>
    <property type="match status" value="1"/>
</dbReference>
<dbReference type="Gene3D" id="2.40.50.140">
    <property type="entry name" value="Nucleic acid-binding proteins"/>
    <property type="match status" value="1"/>
</dbReference>
<dbReference type="HAMAP" id="MF_01588">
    <property type="entry name" value="DNA_ligase_A"/>
    <property type="match status" value="1"/>
</dbReference>
<dbReference type="InterPro" id="IPR001357">
    <property type="entry name" value="BRCT_dom"/>
</dbReference>
<dbReference type="InterPro" id="IPR036420">
    <property type="entry name" value="BRCT_dom_sf"/>
</dbReference>
<dbReference type="InterPro" id="IPR041663">
    <property type="entry name" value="DisA/LigA_HHH"/>
</dbReference>
<dbReference type="InterPro" id="IPR001679">
    <property type="entry name" value="DNA_ligase"/>
</dbReference>
<dbReference type="InterPro" id="IPR033136">
    <property type="entry name" value="DNA_ligase_CS"/>
</dbReference>
<dbReference type="InterPro" id="IPR013839">
    <property type="entry name" value="DNAligase_adenylation"/>
</dbReference>
<dbReference type="InterPro" id="IPR013840">
    <property type="entry name" value="DNAligase_N"/>
</dbReference>
<dbReference type="InterPro" id="IPR003583">
    <property type="entry name" value="Hlx-hairpin-Hlx_DNA-bd_motif"/>
</dbReference>
<dbReference type="InterPro" id="IPR012340">
    <property type="entry name" value="NA-bd_OB-fold"/>
</dbReference>
<dbReference type="InterPro" id="IPR004150">
    <property type="entry name" value="NAD_DNA_ligase_OB"/>
</dbReference>
<dbReference type="InterPro" id="IPR010994">
    <property type="entry name" value="RuvA_2-like"/>
</dbReference>
<dbReference type="NCBIfam" id="TIGR00575">
    <property type="entry name" value="dnlj"/>
    <property type="match status" value="1"/>
</dbReference>
<dbReference type="NCBIfam" id="NF005932">
    <property type="entry name" value="PRK07956.1"/>
    <property type="match status" value="1"/>
</dbReference>
<dbReference type="PANTHER" id="PTHR23389">
    <property type="entry name" value="CHROMOSOME TRANSMISSION FIDELITY FACTOR 18"/>
    <property type="match status" value="1"/>
</dbReference>
<dbReference type="PANTHER" id="PTHR23389:SF9">
    <property type="entry name" value="DNA LIGASE"/>
    <property type="match status" value="1"/>
</dbReference>
<dbReference type="Pfam" id="PF00533">
    <property type="entry name" value="BRCT"/>
    <property type="match status" value="1"/>
</dbReference>
<dbReference type="Pfam" id="PF01653">
    <property type="entry name" value="DNA_ligase_aden"/>
    <property type="match status" value="1"/>
</dbReference>
<dbReference type="Pfam" id="PF03120">
    <property type="entry name" value="DNA_ligase_OB"/>
    <property type="match status" value="1"/>
</dbReference>
<dbReference type="Pfam" id="PF12826">
    <property type="entry name" value="HHH_2"/>
    <property type="match status" value="1"/>
</dbReference>
<dbReference type="Pfam" id="PF14520">
    <property type="entry name" value="HHH_5"/>
    <property type="match status" value="1"/>
</dbReference>
<dbReference type="PIRSF" id="PIRSF001604">
    <property type="entry name" value="LigA"/>
    <property type="match status" value="1"/>
</dbReference>
<dbReference type="SMART" id="SM00292">
    <property type="entry name" value="BRCT"/>
    <property type="match status" value="1"/>
</dbReference>
<dbReference type="SMART" id="SM00278">
    <property type="entry name" value="HhH1"/>
    <property type="match status" value="3"/>
</dbReference>
<dbReference type="SMART" id="SM00532">
    <property type="entry name" value="LIGANc"/>
    <property type="match status" value="1"/>
</dbReference>
<dbReference type="SUPFAM" id="SSF52113">
    <property type="entry name" value="BRCT domain"/>
    <property type="match status" value="1"/>
</dbReference>
<dbReference type="SUPFAM" id="SSF56091">
    <property type="entry name" value="DNA ligase/mRNA capping enzyme, catalytic domain"/>
    <property type="match status" value="1"/>
</dbReference>
<dbReference type="SUPFAM" id="SSF50249">
    <property type="entry name" value="Nucleic acid-binding proteins"/>
    <property type="match status" value="1"/>
</dbReference>
<dbReference type="SUPFAM" id="SSF47781">
    <property type="entry name" value="RuvA domain 2-like"/>
    <property type="match status" value="1"/>
</dbReference>
<dbReference type="PROSITE" id="PS50172">
    <property type="entry name" value="BRCT"/>
    <property type="match status" value="1"/>
</dbReference>
<dbReference type="PROSITE" id="PS01056">
    <property type="entry name" value="DNA_LIGASE_N2"/>
    <property type="match status" value="1"/>
</dbReference>
<gene>
    <name evidence="1" type="primary">ligA</name>
    <name type="ordered locus">CPE2259</name>
</gene>
<reference key="1">
    <citation type="journal article" date="2002" name="Proc. Natl. Acad. Sci. U.S.A.">
        <title>Complete genome sequence of Clostridium perfringens, an anaerobic flesh-eater.</title>
        <authorList>
            <person name="Shimizu T."/>
            <person name="Ohtani K."/>
            <person name="Hirakawa H."/>
            <person name="Ohshima K."/>
            <person name="Yamashita A."/>
            <person name="Shiba T."/>
            <person name="Ogasawara N."/>
            <person name="Hattori M."/>
            <person name="Kuhara S."/>
            <person name="Hayashi H."/>
        </authorList>
    </citation>
    <scope>NUCLEOTIDE SEQUENCE [LARGE SCALE GENOMIC DNA]</scope>
    <source>
        <strain>13 / Type A</strain>
    </source>
</reference>
<sequence>MDKKKLIEELVEELNKYAYEYYVLGNSSVTDKDYDKKYYELVDLEKETGYKLPYSPTQRVGDVILPEFKKYTHKARLWSLDKAQTLEEIREWHNRNVKFLEEYNRTSDEELPPLKYILTKKFDGLTINLSYDENGVLVTGATRGTGAIGEDVTAQVKTIKSIPLKIDCHDFLEIHGEAIMTTEAFEKYNSEAETPLKNLRNGAAGALRNLNVAETAKRNLSAFFYDVGYKEGAPFKTYMEMLNFIKTKGFPMDDYIRECTTLDEIQKEIDYIRDIRFDLNYDIDGLVIAIDDIRTRDLLGYTVKFPKWAIAYKFEAQEATTKLLDVEWNVGRSGRVSPTAILEPVELAGVTVKRATLNNMDDIARKGVRLGAEVFVRRSNDVIPEIMGVVPESLEGTKEIEEPKVCPACGAHLVHEGVHIYCENTLGCKPQMVKTIVHFAGREAMNIAGFSEKTAEQLFEKLDIRDISDLYKLEYEKLLDLDKFGPKKAQNLLDAIEKSKDCTLEAFLYSLGIPNVGVKTAKDLVKRFESLENLEKATFEELVSVQDVGDIVARSIIEFFKEERTLKVINELLSLGVNPHYEKKEVLESPFMGKTVVVTGTLENYSRTSIKEKLESLGAKVSGSVSKKTDFVIAGEAAGSKYDKAKSLGVTILSEEEFENMI</sequence>
<comment type="function">
    <text evidence="1">DNA ligase that catalyzes the formation of phosphodiester linkages between 5'-phosphoryl and 3'-hydroxyl groups in double-stranded DNA using NAD as a coenzyme and as the energy source for the reaction. It is essential for DNA replication and repair of damaged DNA.</text>
</comment>
<comment type="catalytic activity">
    <reaction evidence="1">
        <text>NAD(+) + (deoxyribonucleotide)n-3'-hydroxyl + 5'-phospho-(deoxyribonucleotide)m = (deoxyribonucleotide)n+m + AMP + beta-nicotinamide D-nucleotide.</text>
        <dbReference type="EC" id="6.5.1.2"/>
    </reaction>
</comment>
<comment type="cofactor">
    <cofactor evidence="1">
        <name>Mg(2+)</name>
        <dbReference type="ChEBI" id="CHEBI:18420"/>
    </cofactor>
    <cofactor evidence="1">
        <name>Mn(2+)</name>
        <dbReference type="ChEBI" id="CHEBI:29035"/>
    </cofactor>
</comment>
<comment type="similarity">
    <text evidence="1">Belongs to the NAD-dependent DNA ligase family. LigA subfamily.</text>
</comment>
<comment type="sequence caution" evidence="2">
    <conflict type="erroneous initiation">
        <sequence resource="EMBL-CDS" id="BAB81965"/>
    </conflict>
</comment>
<keyword id="KW-0227">DNA damage</keyword>
<keyword id="KW-0234">DNA repair</keyword>
<keyword id="KW-0235">DNA replication</keyword>
<keyword id="KW-0436">Ligase</keyword>
<keyword id="KW-0460">Magnesium</keyword>
<keyword id="KW-0464">Manganese</keyword>
<keyword id="KW-0479">Metal-binding</keyword>
<keyword id="KW-0520">NAD</keyword>
<keyword id="KW-1185">Reference proteome</keyword>
<keyword id="KW-0862">Zinc</keyword>
<evidence type="ECO:0000255" key="1">
    <source>
        <dbReference type="HAMAP-Rule" id="MF_01588"/>
    </source>
</evidence>
<evidence type="ECO:0000305" key="2"/>
<name>DNLJ_CLOPE</name>